<reference key="1">
    <citation type="journal article" date="2003" name="Nucleic Acids Res.">
        <title>What's in the genome of a filamentous fungus? Analysis of the Neurospora genome sequence.</title>
        <authorList>
            <person name="Mannhaupt G."/>
            <person name="Montrone C."/>
            <person name="Haase D."/>
            <person name="Mewes H.-W."/>
            <person name="Aign V."/>
            <person name="Hoheisel J.D."/>
            <person name="Fartmann B."/>
            <person name="Nyakatura G."/>
            <person name="Kempken F."/>
            <person name="Maier J."/>
            <person name="Schulte U."/>
        </authorList>
    </citation>
    <scope>NUCLEOTIDE SEQUENCE [LARGE SCALE GENOMIC DNA]</scope>
    <source>
        <strain>ATCC 24698 / 74-OR23-1A / CBS 708.71 / DSM 1257 / FGSC 987</strain>
    </source>
</reference>
<reference key="2">
    <citation type="journal article" date="2003" name="Nature">
        <title>The genome sequence of the filamentous fungus Neurospora crassa.</title>
        <authorList>
            <person name="Galagan J.E."/>
            <person name="Calvo S.E."/>
            <person name="Borkovich K.A."/>
            <person name="Selker E.U."/>
            <person name="Read N.D."/>
            <person name="Jaffe D.B."/>
            <person name="FitzHugh W."/>
            <person name="Ma L.-J."/>
            <person name="Smirnov S."/>
            <person name="Purcell S."/>
            <person name="Rehman B."/>
            <person name="Elkins T."/>
            <person name="Engels R."/>
            <person name="Wang S."/>
            <person name="Nielsen C.B."/>
            <person name="Butler J."/>
            <person name="Endrizzi M."/>
            <person name="Qui D."/>
            <person name="Ianakiev P."/>
            <person name="Bell-Pedersen D."/>
            <person name="Nelson M.A."/>
            <person name="Werner-Washburne M."/>
            <person name="Selitrennikoff C.P."/>
            <person name="Kinsey J.A."/>
            <person name="Braun E.L."/>
            <person name="Zelter A."/>
            <person name="Schulte U."/>
            <person name="Kothe G.O."/>
            <person name="Jedd G."/>
            <person name="Mewes H.-W."/>
            <person name="Staben C."/>
            <person name="Marcotte E."/>
            <person name="Greenberg D."/>
            <person name="Roy A."/>
            <person name="Foley K."/>
            <person name="Naylor J."/>
            <person name="Stange-Thomann N."/>
            <person name="Barrett R."/>
            <person name="Gnerre S."/>
            <person name="Kamal M."/>
            <person name="Kamvysselis M."/>
            <person name="Mauceli E.W."/>
            <person name="Bielke C."/>
            <person name="Rudd S."/>
            <person name="Frishman D."/>
            <person name="Krystofova S."/>
            <person name="Rasmussen C."/>
            <person name="Metzenberg R.L."/>
            <person name="Perkins D.D."/>
            <person name="Kroken S."/>
            <person name="Cogoni C."/>
            <person name="Macino G."/>
            <person name="Catcheside D.E.A."/>
            <person name="Li W."/>
            <person name="Pratt R.J."/>
            <person name="Osmani S.A."/>
            <person name="DeSouza C.P.C."/>
            <person name="Glass N.L."/>
            <person name="Orbach M.J."/>
            <person name="Berglund J.A."/>
            <person name="Voelker R."/>
            <person name="Yarden O."/>
            <person name="Plamann M."/>
            <person name="Seiler S."/>
            <person name="Dunlap J.C."/>
            <person name="Radford A."/>
            <person name="Aramayo R."/>
            <person name="Natvig D.O."/>
            <person name="Alex L.A."/>
            <person name="Mannhaupt G."/>
            <person name="Ebbole D.J."/>
            <person name="Freitag M."/>
            <person name="Paulsen I."/>
            <person name="Sachs M.S."/>
            <person name="Lander E.S."/>
            <person name="Nusbaum C."/>
            <person name="Birren B.W."/>
        </authorList>
    </citation>
    <scope>NUCLEOTIDE SEQUENCE [LARGE SCALE GENOMIC DNA]</scope>
    <source>
        <strain>ATCC 24698 / 74-OR23-1A / CBS 708.71 / DSM 1257 / FGSC 987</strain>
    </source>
</reference>
<dbReference type="EC" id="3.6.4.13"/>
<dbReference type="EMBL" id="AL353822">
    <property type="protein sequence ID" value="CAB88635.1"/>
    <property type="molecule type" value="Genomic_DNA"/>
</dbReference>
<dbReference type="EMBL" id="CM002240">
    <property type="protein sequence ID" value="EAA31690.3"/>
    <property type="molecule type" value="Genomic_DNA"/>
</dbReference>
<dbReference type="PIR" id="T48796">
    <property type="entry name" value="T48796"/>
</dbReference>
<dbReference type="RefSeq" id="XP_960926.3">
    <property type="nucleotide sequence ID" value="XM_955833.3"/>
</dbReference>
<dbReference type="SMR" id="Q9P6U9"/>
<dbReference type="FunCoup" id="Q9P6U9">
    <property type="interactions" value="1226"/>
</dbReference>
<dbReference type="STRING" id="367110.Q9P6U9"/>
<dbReference type="PaxDb" id="5141-EFNCRP00000004089"/>
<dbReference type="EnsemblFungi" id="EAA31690">
    <property type="protein sequence ID" value="EAA31690"/>
    <property type="gene ID" value="NCU01369"/>
</dbReference>
<dbReference type="GeneID" id="3877087"/>
<dbReference type="KEGG" id="ncr:NCU01369"/>
<dbReference type="VEuPathDB" id="FungiDB:NCU01369"/>
<dbReference type="HOGENOM" id="CLU_003041_16_3_1"/>
<dbReference type="InParanoid" id="Q9P6U9"/>
<dbReference type="OrthoDB" id="196131at2759"/>
<dbReference type="Proteomes" id="UP000001805">
    <property type="component" value="Chromosome 2, Linkage Group V"/>
</dbReference>
<dbReference type="GO" id="GO:0010494">
    <property type="term" value="C:cytoplasmic stress granule"/>
    <property type="evidence" value="ECO:0007669"/>
    <property type="project" value="EnsemblFungi"/>
</dbReference>
<dbReference type="GO" id="GO:0005634">
    <property type="term" value="C:nucleus"/>
    <property type="evidence" value="ECO:0000318"/>
    <property type="project" value="GO_Central"/>
</dbReference>
<dbReference type="GO" id="GO:0005681">
    <property type="term" value="C:spliceosomal complex"/>
    <property type="evidence" value="ECO:0007669"/>
    <property type="project" value="EnsemblFungi"/>
</dbReference>
<dbReference type="GO" id="GO:0005524">
    <property type="term" value="F:ATP binding"/>
    <property type="evidence" value="ECO:0007669"/>
    <property type="project" value="UniProtKB-KW"/>
</dbReference>
<dbReference type="GO" id="GO:0016887">
    <property type="term" value="F:ATP hydrolysis activity"/>
    <property type="evidence" value="ECO:0007669"/>
    <property type="project" value="RHEA"/>
</dbReference>
<dbReference type="GO" id="GO:0031370">
    <property type="term" value="F:eukaryotic initiation factor 4G binding"/>
    <property type="evidence" value="ECO:0007669"/>
    <property type="project" value="EnsemblFungi"/>
</dbReference>
<dbReference type="GO" id="GO:0051880">
    <property type="term" value="F:G-quadruplex DNA binding"/>
    <property type="evidence" value="ECO:0007669"/>
    <property type="project" value="EnsemblFungi"/>
</dbReference>
<dbReference type="GO" id="GO:0002151">
    <property type="term" value="F:G-quadruplex RNA binding"/>
    <property type="evidence" value="ECO:0007669"/>
    <property type="project" value="EnsemblFungi"/>
</dbReference>
<dbReference type="GO" id="GO:0003729">
    <property type="term" value="F:mRNA binding"/>
    <property type="evidence" value="ECO:0000318"/>
    <property type="project" value="GO_Central"/>
</dbReference>
<dbReference type="GO" id="GO:0003724">
    <property type="term" value="F:RNA helicase activity"/>
    <property type="evidence" value="ECO:0000318"/>
    <property type="project" value="GO_Central"/>
</dbReference>
<dbReference type="GO" id="GO:0033592">
    <property type="term" value="F:RNA strand annealing activity"/>
    <property type="evidence" value="ECO:0007669"/>
    <property type="project" value="EnsemblFungi"/>
</dbReference>
<dbReference type="GO" id="GO:0003743">
    <property type="term" value="F:translation initiation factor activity"/>
    <property type="evidence" value="ECO:0007669"/>
    <property type="project" value="UniProtKB-KW"/>
</dbReference>
<dbReference type="GO" id="GO:0002183">
    <property type="term" value="P:cytoplasmic translational initiation"/>
    <property type="evidence" value="ECO:0007669"/>
    <property type="project" value="EnsemblFungi"/>
</dbReference>
<dbReference type="GO" id="GO:1990625">
    <property type="term" value="P:negative regulation of cytoplasmic translational initiation in response to stress"/>
    <property type="evidence" value="ECO:0007669"/>
    <property type="project" value="EnsemblFungi"/>
</dbReference>
<dbReference type="GO" id="GO:1901195">
    <property type="term" value="P:positive regulation of formation of translation preinitiation complex"/>
    <property type="evidence" value="ECO:0007669"/>
    <property type="project" value="EnsemblFungi"/>
</dbReference>
<dbReference type="GO" id="GO:0031047">
    <property type="term" value="P:regulatory ncRNA-mediated gene silencing"/>
    <property type="evidence" value="ECO:0007669"/>
    <property type="project" value="EnsemblFungi"/>
</dbReference>
<dbReference type="GO" id="GO:0000390">
    <property type="term" value="P:spliceosomal complex disassembly"/>
    <property type="evidence" value="ECO:0007669"/>
    <property type="project" value="EnsemblFungi"/>
</dbReference>
<dbReference type="CDD" id="cd18787">
    <property type="entry name" value="SF2_C_DEAD"/>
    <property type="match status" value="1"/>
</dbReference>
<dbReference type="FunFam" id="3.40.50.300:FF:000160">
    <property type="entry name" value="ATP-dependent RNA helicase DDX3X"/>
    <property type="match status" value="1"/>
</dbReference>
<dbReference type="FunFam" id="3.40.50.300:FF:000008">
    <property type="entry name" value="ATP-dependent RNA helicase RhlB"/>
    <property type="match status" value="1"/>
</dbReference>
<dbReference type="Gene3D" id="3.40.50.300">
    <property type="entry name" value="P-loop containing nucleotide triphosphate hydrolases"/>
    <property type="match status" value="2"/>
</dbReference>
<dbReference type="InterPro" id="IPR011545">
    <property type="entry name" value="DEAD/DEAH_box_helicase_dom"/>
</dbReference>
<dbReference type="InterPro" id="IPR014001">
    <property type="entry name" value="Helicase_ATP-bd"/>
</dbReference>
<dbReference type="InterPro" id="IPR001650">
    <property type="entry name" value="Helicase_C-like"/>
</dbReference>
<dbReference type="InterPro" id="IPR027417">
    <property type="entry name" value="P-loop_NTPase"/>
</dbReference>
<dbReference type="InterPro" id="IPR000629">
    <property type="entry name" value="RNA-helicase_DEAD-box_CS"/>
</dbReference>
<dbReference type="InterPro" id="IPR014014">
    <property type="entry name" value="RNA_helicase_DEAD_Q_motif"/>
</dbReference>
<dbReference type="PANTHER" id="PTHR47958">
    <property type="entry name" value="ATP-DEPENDENT RNA HELICASE DBP3"/>
    <property type="match status" value="1"/>
</dbReference>
<dbReference type="Pfam" id="PF00270">
    <property type="entry name" value="DEAD"/>
    <property type="match status" value="1"/>
</dbReference>
<dbReference type="Pfam" id="PF00271">
    <property type="entry name" value="Helicase_C"/>
    <property type="match status" value="1"/>
</dbReference>
<dbReference type="SMART" id="SM00487">
    <property type="entry name" value="DEXDc"/>
    <property type="match status" value="1"/>
</dbReference>
<dbReference type="SMART" id="SM00490">
    <property type="entry name" value="HELICc"/>
    <property type="match status" value="1"/>
</dbReference>
<dbReference type="SUPFAM" id="SSF52540">
    <property type="entry name" value="P-loop containing nucleoside triphosphate hydrolases"/>
    <property type="match status" value="1"/>
</dbReference>
<dbReference type="PROSITE" id="PS00039">
    <property type="entry name" value="DEAD_ATP_HELICASE"/>
    <property type="match status" value="1"/>
</dbReference>
<dbReference type="PROSITE" id="PS51192">
    <property type="entry name" value="HELICASE_ATP_BIND_1"/>
    <property type="match status" value="1"/>
</dbReference>
<dbReference type="PROSITE" id="PS51194">
    <property type="entry name" value="HELICASE_CTER"/>
    <property type="match status" value="1"/>
</dbReference>
<dbReference type="PROSITE" id="PS51195">
    <property type="entry name" value="Q_MOTIF"/>
    <property type="match status" value="1"/>
</dbReference>
<sequence>MADQLSSGMGNLSIDQQPPSGPQMGGQGQMRRSYIPPHLRGKMGDAAPPMAGPNGLNNSAWAGNNNYDARGPGGGGNWPAPGGPPGPGFEGQQGAGWGGPRPQGGFNPNAYRGNAGAGAGAGAGGGGGSFSNRGSGDGQWRDGKHIPGPANPRVERELFGTPDDPSKQHTGINFEKYDDIPVEASGDNVPEPVLTFSNPPLDNHLISNIQLARYNVPTPVQKYSIPIVMGGRDLMACAQTGSGKTGGFLFPILSQSFHTGPSPIPASAAGAYGRQRKAYPTALILAPTRELVSQIYDEARKFAYRSWVRPCVVYGGADIGSQLRQIERGCDLLVATPGRLVDLIERGRISLCNIKYLVLDEADRMLDMGFEPQIRRIVEGEDMPKVNDRQTLMFSATFPRDIQILARDFLKDYIFLSVGRVGSTSENITQKVEYVEDIDKRSVLLDILHTHAGGLTLIFVETKRMADSLSDFLINQNFPATSIHGDRTQRERERALEMFRNGRCPILVATAVAARGLDIPNVTHVINYDLPTDIDDYVHRIGRTGRAGNTGIATAFFNRGNRGVVRELLELLKEANQEVPAFLETIARESSFGGGRGGRGGGRGGGRGRTQTADYRKFGGSGGGGFGGGFGGAPASGGYGGGGYGGGGPPAGGYGGGGGAGYGGGGGGGGYGGGGYGNPGGAGGQSWW</sequence>
<name>DED1_NEUCR</name>
<protein>
    <recommendedName>
        <fullName>ATP-dependent RNA helicase ded1</fullName>
        <ecNumber>3.6.4.13</ecNumber>
    </recommendedName>
    <alternativeName>
        <fullName>DEAD box RNA helicase 9</fullName>
    </alternativeName>
</protein>
<feature type="chain" id="PRO_0000232161" description="ATP-dependent RNA helicase ded1">
    <location>
        <begin position="1"/>
        <end position="688"/>
    </location>
</feature>
<feature type="domain" description="Helicase ATP-binding" evidence="2">
    <location>
        <begin position="225"/>
        <end position="416"/>
    </location>
</feature>
<feature type="domain" description="Helicase C-terminal" evidence="3">
    <location>
        <begin position="427"/>
        <end position="587"/>
    </location>
</feature>
<feature type="region of interest" description="Disordered" evidence="4">
    <location>
        <begin position="1"/>
        <end position="170"/>
    </location>
</feature>
<feature type="region of interest" description="Disordered" evidence="4">
    <location>
        <begin position="590"/>
        <end position="615"/>
    </location>
</feature>
<feature type="short sequence motif" description="Q motif">
    <location>
        <begin position="194"/>
        <end position="222"/>
    </location>
</feature>
<feature type="short sequence motif" description="DEAD box">
    <location>
        <begin position="360"/>
        <end position="363"/>
    </location>
</feature>
<feature type="compositionally biased region" description="Polar residues" evidence="4">
    <location>
        <begin position="1"/>
        <end position="15"/>
    </location>
</feature>
<feature type="compositionally biased region" description="Polar residues" evidence="4">
    <location>
        <begin position="55"/>
        <end position="67"/>
    </location>
</feature>
<feature type="compositionally biased region" description="Gly residues" evidence="4">
    <location>
        <begin position="88"/>
        <end position="102"/>
    </location>
</feature>
<feature type="compositionally biased region" description="Low complexity" evidence="4">
    <location>
        <begin position="103"/>
        <end position="114"/>
    </location>
</feature>
<feature type="compositionally biased region" description="Gly residues" evidence="4">
    <location>
        <begin position="115"/>
        <end position="129"/>
    </location>
</feature>
<feature type="compositionally biased region" description="Gly residues" evidence="4">
    <location>
        <begin position="592"/>
        <end position="608"/>
    </location>
</feature>
<feature type="binding site" evidence="2">
    <location>
        <begin position="238"/>
        <end position="245"/>
    </location>
    <ligand>
        <name>ATP</name>
        <dbReference type="ChEBI" id="CHEBI:30616"/>
    </ligand>
</feature>
<keyword id="KW-0067">ATP-binding</keyword>
<keyword id="KW-0963">Cytoplasm</keyword>
<keyword id="KW-0347">Helicase</keyword>
<keyword id="KW-0378">Hydrolase</keyword>
<keyword id="KW-0396">Initiation factor</keyword>
<keyword id="KW-0547">Nucleotide-binding</keyword>
<keyword id="KW-0648">Protein biosynthesis</keyword>
<keyword id="KW-1185">Reference proteome</keyword>
<keyword id="KW-0694">RNA-binding</keyword>
<proteinExistence type="inferred from homology"/>
<evidence type="ECO:0000250" key="1"/>
<evidence type="ECO:0000255" key="2">
    <source>
        <dbReference type="PROSITE-ProRule" id="PRU00541"/>
    </source>
</evidence>
<evidence type="ECO:0000255" key="3">
    <source>
        <dbReference type="PROSITE-ProRule" id="PRU00542"/>
    </source>
</evidence>
<evidence type="ECO:0000256" key="4">
    <source>
        <dbReference type="SAM" id="MobiDB-lite"/>
    </source>
</evidence>
<evidence type="ECO:0000305" key="5"/>
<comment type="function">
    <text evidence="1">ATP-binding RNA helicase involved in translation initiation. Remodels RNA in response to ADP and ATP concentrations by facilitating disruption, but also formation of RNA duplexes (By similarity).</text>
</comment>
<comment type="catalytic activity">
    <reaction>
        <text>ATP + H2O = ADP + phosphate + H(+)</text>
        <dbReference type="Rhea" id="RHEA:13065"/>
        <dbReference type="ChEBI" id="CHEBI:15377"/>
        <dbReference type="ChEBI" id="CHEBI:15378"/>
        <dbReference type="ChEBI" id="CHEBI:30616"/>
        <dbReference type="ChEBI" id="CHEBI:43474"/>
        <dbReference type="ChEBI" id="CHEBI:456216"/>
        <dbReference type="EC" id="3.6.4.13"/>
    </reaction>
</comment>
<comment type="subcellular location">
    <subcellularLocation>
        <location evidence="1">Cytoplasm</location>
    </subcellularLocation>
</comment>
<comment type="domain">
    <text>The Q motif is unique to and characteristic of the DEAD box family of RNA helicases and controls ATP binding and hydrolysis.</text>
</comment>
<comment type="similarity">
    <text evidence="5">Belongs to the DEAD box helicase family. DDX3/DED1 subfamily.</text>
</comment>
<gene>
    <name type="primary">drh-9</name>
    <name type="synonym">ded1</name>
    <name type="ORF">15E6.040</name>
    <name type="ORF">NCU01369</name>
</gene>
<accession>Q9P6U9</accession>
<accession>Q7S7K7</accession>
<organism>
    <name type="scientific">Neurospora crassa (strain ATCC 24698 / 74-OR23-1A / CBS 708.71 / DSM 1257 / FGSC 987)</name>
    <dbReference type="NCBI Taxonomy" id="367110"/>
    <lineage>
        <taxon>Eukaryota</taxon>
        <taxon>Fungi</taxon>
        <taxon>Dikarya</taxon>
        <taxon>Ascomycota</taxon>
        <taxon>Pezizomycotina</taxon>
        <taxon>Sordariomycetes</taxon>
        <taxon>Sordariomycetidae</taxon>
        <taxon>Sordariales</taxon>
        <taxon>Sordariaceae</taxon>
        <taxon>Neurospora</taxon>
    </lineage>
</organism>